<feature type="propeptide" id="PRO_0000002495" evidence="1">
    <location>
        <begin position="1"/>
        <end position="5"/>
    </location>
</feature>
<feature type="chain" id="PRO_0000002496" description="Sodium/potassium-transporting ATPase subunit alpha-1">
    <location>
        <begin position="6"/>
        <end position="1022"/>
    </location>
</feature>
<feature type="topological domain" description="Cytoplasmic" evidence="3">
    <location>
        <begin position="6"/>
        <end position="86"/>
    </location>
</feature>
<feature type="transmembrane region" description="Helical" evidence="3">
    <location>
        <begin position="87"/>
        <end position="107"/>
    </location>
</feature>
<feature type="topological domain" description="Extracellular" evidence="3">
    <location>
        <begin position="108"/>
        <end position="130"/>
    </location>
</feature>
<feature type="transmembrane region" description="Helical" evidence="3">
    <location>
        <begin position="131"/>
        <end position="151"/>
    </location>
</feature>
<feature type="topological domain" description="Cytoplasmic" evidence="3">
    <location>
        <begin position="152"/>
        <end position="287"/>
    </location>
</feature>
<feature type="transmembrane region" description="Helical" evidence="3">
    <location>
        <begin position="288"/>
        <end position="307"/>
    </location>
</feature>
<feature type="topological domain" description="Extracellular" evidence="3">
    <location>
        <begin position="308"/>
        <end position="319"/>
    </location>
</feature>
<feature type="transmembrane region" description="Helical" evidence="3">
    <location>
        <begin position="320"/>
        <end position="337"/>
    </location>
</feature>
<feature type="topological domain" description="Cytoplasmic" evidence="3">
    <location>
        <begin position="338"/>
        <end position="771"/>
    </location>
</feature>
<feature type="transmembrane region" description="Helical" evidence="3">
    <location>
        <begin position="772"/>
        <end position="791"/>
    </location>
</feature>
<feature type="topological domain" description="Extracellular" evidence="3">
    <location>
        <begin position="792"/>
        <end position="801"/>
    </location>
</feature>
<feature type="transmembrane region" description="Helical" evidence="3">
    <location>
        <begin position="802"/>
        <end position="822"/>
    </location>
</feature>
<feature type="topological domain" description="Cytoplasmic" evidence="3">
    <location>
        <begin position="823"/>
        <end position="842"/>
    </location>
</feature>
<feature type="transmembrane region" description="Helical" evidence="3">
    <location>
        <begin position="843"/>
        <end position="865"/>
    </location>
</feature>
<feature type="topological domain" description="Extracellular" evidence="3">
    <location>
        <begin position="866"/>
        <end position="917"/>
    </location>
</feature>
<feature type="transmembrane region" description="Helical" evidence="3">
    <location>
        <begin position="918"/>
        <end position="937"/>
    </location>
</feature>
<feature type="topological domain" description="Cytoplasmic" evidence="3">
    <location>
        <begin position="938"/>
        <end position="950"/>
    </location>
</feature>
<feature type="transmembrane region" description="Helical" evidence="3">
    <location>
        <begin position="951"/>
        <end position="969"/>
    </location>
</feature>
<feature type="topological domain" description="Extracellular" evidence="3">
    <location>
        <begin position="970"/>
        <end position="984"/>
    </location>
</feature>
<feature type="transmembrane region" description="Helical" evidence="3">
    <location>
        <begin position="985"/>
        <end position="1005"/>
    </location>
</feature>
<feature type="topological domain" description="Cytoplasmic" evidence="3">
    <location>
        <begin position="1006"/>
        <end position="1022"/>
    </location>
</feature>
<feature type="region of interest" description="Disordered" evidence="4">
    <location>
        <begin position="1"/>
        <end position="34"/>
    </location>
</feature>
<feature type="region of interest" description="Interaction with phosphoinositide-3 kinase" evidence="1">
    <location>
        <begin position="81"/>
        <end position="83"/>
    </location>
</feature>
<feature type="region of interest" description="Disordered" evidence="4">
    <location>
        <begin position="213"/>
        <end position="234"/>
    </location>
</feature>
<feature type="compositionally biased region" description="Basic and acidic residues" evidence="4">
    <location>
        <begin position="1"/>
        <end position="10"/>
    </location>
</feature>
<feature type="active site" description="4-aspartylphosphate intermediate" evidence="1">
    <location>
        <position position="375"/>
    </location>
</feature>
<feature type="binding site" evidence="1">
    <location>
        <position position="486"/>
    </location>
    <ligand>
        <name>ATP</name>
        <dbReference type="ChEBI" id="CHEBI:30616"/>
    </ligand>
</feature>
<feature type="binding site" evidence="1">
    <location>
        <position position="716"/>
    </location>
    <ligand>
        <name>Mg(2+)</name>
        <dbReference type="ChEBI" id="CHEBI:18420"/>
    </ligand>
</feature>
<feature type="binding site" evidence="1">
    <location>
        <position position="720"/>
    </location>
    <ligand>
        <name>Mg(2+)</name>
        <dbReference type="ChEBI" id="CHEBI:18420"/>
    </ligand>
</feature>
<feature type="modified residue" description="Phosphoserine; by PKC" evidence="1">
    <location>
        <position position="16"/>
    </location>
</feature>
<feature type="modified residue" description="Phosphoserine; by PKA" evidence="1">
    <location>
        <position position="942"/>
    </location>
</feature>
<name>AT1A1_ANGAN</name>
<gene>
    <name type="primary">atp1a1</name>
</gene>
<proteinExistence type="evidence at transcript level"/>
<reference key="1">
    <citation type="journal article" date="1995" name="Comp. Biochem. Physiol.">
        <title>Primary sequence, tissue specificity and expression of the Na+,K(+)-ATPase alpha 1 subunit in the European eel (Anguilla anguilla).</title>
        <authorList>
            <person name="Cutler C."/>
            <person name="Sanders I.L."/>
            <person name="Hazon N."/>
            <person name="Cramb G."/>
        </authorList>
    </citation>
    <scope>NUCLEOTIDE SEQUENCE [MRNA]</scope>
    <source>
        <tissue>Gill</tissue>
    </source>
</reference>
<comment type="function">
    <text evidence="2">This is the catalytic component of the active enzyme, which catalyzes the hydrolysis of ATP coupled with the exchange of sodium and potassium ions across the plasma membrane. This action creates the electrochemical gradient of sodium and potassium ions, providing the energy for active transport of various nutrients.</text>
</comment>
<comment type="catalytic activity">
    <reaction>
        <text>K(+)(out) + Na(+)(in) + ATP + H2O = K(+)(in) + Na(+)(out) + ADP + phosphate + H(+)</text>
        <dbReference type="Rhea" id="RHEA:18353"/>
        <dbReference type="ChEBI" id="CHEBI:15377"/>
        <dbReference type="ChEBI" id="CHEBI:15378"/>
        <dbReference type="ChEBI" id="CHEBI:29101"/>
        <dbReference type="ChEBI" id="CHEBI:29103"/>
        <dbReference type="ChEBI" id="CHEBI:30616"/>
        <dbReference type="ChEBI" id="CHEBI:43474"/>
        <dbReference type="ChEBI" id="CHEBI:456216"/>
        <dbReference type="EC" id="7.2.2.13"/>
    </reaction>
</comment>
<comment type="subunit">
    <text evidence="5">The sodium/potassium-transporting ATPase is composed of a catalytic alpha subunit, an auxiliary non-catalytic beta subunit and an additional regulatory subunit.</text>
</comment>
<comment type="subcellular location">
    <subcellularLocation>
        <location evidence="2">Cell membrane</location>
        <location evidence="2">Sarcolemma</location>
        <topology evidence="3">Multi-pass membrane protein</topology>
    </subcellularLocation>
</comment>
<comment type="similarity">
    <text evidence="5">Belongs to the cation transport ATPase (P-type) (TC 3.A.3) family. Type IIC subfamily.</text>
</comment>
<sequence length="1022" mass="112716">MGRGTGHDQYELAATSEGGRKKKRDKKKKDMDDLKKEVDLDDHKLTLDELHRKYGTDLTRGLTSSRAAEILARDGPNALTPPPTTPEWVKFCRQLFGGFSMLLWIGAILCFLAYGIQAASEDEPANDNLYLGVVLSAVVIITGCFSYYQEAKSSRIMDSFKNLVPQQALVIRDGEKKCINAEEVVAGDLVEVKGGDRIPADLRVASAQGCKVDNSSLTGESEPQTRSPDFSNENPLETRNIAFFSTNCVEGTARGVVINTGDRTVMGRIATLASSLEVGRTPISIEIEHFIHIITGVAVFLGVSFFILSLILGYAWLEAVIFLIGIIVANVPEGLLATVTVCLTLTAKRMAKKNCLVKNLEAVETLGSTSTICSDKTGTLTQNRMTVAHMWFDNQIHEADTTENQSGTSFDRSSATWAALARIAGLCNRAVFLAEQSNVPILKRDVAGDASESALLKCIELCCGSVNDMRDKHVKIAEIPFNSTNKYQLSIHKNANSEESKHLLVMKGAPERILDRCSTIMIHGKEQPLDDEMKDAFQNAYVELGGLGERVLGFCHYFLPDDQFAEGFQFDTEEVNFPTENLCFIGLMSMIDPPRAAVLDAVGKCRSPGIKVIMVTGDHPITAKAIAKGVGIISEGNETVEDIAARLNIPINEVNPRDAKACVVHGGELKDLTPEQLDDILKHHTEIVFARTSPQQKLIIVEGCQRQGAIVAVTGDGVNDSPALKKADIGVAMGIAGSDVSKQAADMILLDDNFASIVTGVEEGRLIFDNLKKSIAYTLTSNIPEITPFLLFIIANIPLPLGTVTILCIDLGTDMVPAISLAYEAAESDIMKRQPRNPRTDKLVNERLISIAYGQIGMMQATAGFFTYFVILAENGFLPSTLLGIRVKWDDKYVNDLEDSYGQQWTYEQRKIVEYTCHTSFFASIVIVQWADLIICKTRRNSIIQQGMKNKILIFGLFEETALAAFLSYCPGMDVALRMYPLKPSWWFCAFPYSLLIFLYDEARRFILRRNPDGWVERETYY</sequence>
<accession>Q92030</accession>
<keyword id="KW-0067">ATP-binding</keyword>
<keyword id="KW-1003">Cell membrane</keyword>
<keyword id="KW-0406">Ion transport</keyword>
<keyword id="KW-0460">Magnesium</keyword>
<keyword id="KW-0472">Membrane</keyword>
<keyword id="KW-0479">Metal-binding</keyword>
<keyword id="KW-0547">Nucleotide-binding</keyword>
<keyword id="KW-0597">Phosphoprotein</keyword>
<keyword id="KW-0630">Potassium</keyword>
<keyword id="KW-0633">Potassium transport</keyword>
<keyword id="KW-0915">Sodium</keyword>
<keyword id="KW-0739">Sodium transport</keyword>
<keyword id="KW-0740">Sodium/potassium transport</keyword>
<keyword id="KW-1278">Translocase</keyword>
<keyword id="KW-0812">Transmembrane</keyword>
<keyword id="KW-1133">Transmembrane helix</keyword>
<keyword id="KW-0813">Transport</keyword>
<dbReference type="EC" id="7.2.2.13"/>
<dbReference type="EMBL" id="X76108">
    <property type="protein sequence ID" value="CAA53714.1"/>
    <property type="molecule type" value="mRNA"/>
</dbReference>
<dbReference type="PIR" id="S49127">
    <property type="entry name" value="S49127"/>
</dbReference>
<dbReference type="SMR" id="Q92030"/>
<dbReference type="GO" id="GO:0016020">
    <property type="term" value="C:membrane"/>
    <property type="evidence" value="ECO:0000250"/>
    <property type="project" value="UniProtKB"/>
</dbReference>
<dbReference type="GO" id="GO:0005886">
    <property type="term" value="C:plasma membrane"/>
    <property type="evidence" value="ECO:0000250"/>
    <property type="project" value="UniProtKB"/>
</dbReference>
<dbReference type="GO" id="GO:0042383">
    <property type="term" value="C:sarcolemma"/>
    <property type="evidence" value="ECO:0007669"/>
    <property type="project" value="UniProtKB-SubCell"/>
</dbReference>
<dbReference type="GO" id="GO:0005524">
    <property type="term" value="F:ATP binding"/>
    <property type="evidence" value="ECO:0007669"/>
    <property type="project" value="UniProtKB-KW"/>
</dbReference>
<dbReference type="GO" id="GO:0016887">
    <property type="term" value="F:ATP hydrolysis activity"/>
    <property type="evidence" value="ECO:0007669"/>
    <property type="project" value="InterPro"/>
</dbReference>
<dbReference type="GO" id="GO:0046872">
    <property type="term" value="F:metal ion binding"/>
    <property type="evidence" value="ECO:0007669"/>
    <property type="project" value="UniProtKB-KW"/>
</dbReference>
<dbReference type="GO" id="GO:0005391">
    <property type="term" value="F:P-type sodium:potassium-exchanging transporter activity"/>
    <property type="evidence" value="ECO:0007669"/>
    <property type="project" value="UniProtKB-EC"/>
</dbReference>
<dbReference type="GO" id="GO:0030007">
    <property type="term" value="P:intracellular potassium ion homeostasis"/>
    <property type="evidence" value="ECO:0007669"/>
    <property type="project" value="TreeGrafter"/>
</dbReference>
<dbReference type="GO" id="GO:0006883">
    <property type="term" value="P:intracellular sodium ion homeostasis"/>
    <property type="evidence" value="ECO:0007669"/>
    <property type="project" value="TreeGrafter"/>
</dbReference>
<dbReference type="GO" id="GO:1990573">
    <property type="term" value="P:potassium ion import across plasma membrane"/>
    <property type="evidence" value="ECO:0007669"/>
    <property type="project" value="TreeGrafter"/>
</dbReference>
<dbReference type="GO" id="GO:1902600">
    <property type="term" value="P:proton transmembrane transport"/>
    <property type="evidence" value="ECO:0007669"/>
    <property type="project" value="TreeGrafter"/>
</dbReference>
<dbReference type="GO" id="GO:0036376">
    <property type="term" value="P:sodium ion export across plasma membrane"/>
    <property type="evidence" value="ECO:0007669"/>
    <property type="project" value="TreeGrafter"/>
</dbReference>
<dbReference type="CDD" id="cd02608">
    <property type="entry name" value="P-type_ATPase_Na-K_like"/>
    <property type="match status" value="1"/>
</dbReference>
<dbReference type="FunFam" id="2.70.150.10:FF:000106">
    <property type="entry name" value="Sodium/potassium-transporting ATPase subunit alpha"/>
    <property type="match status" value="1"/>
</dbReference>
<dbReference type="FunFam" id="3.40.1110.10:FF:000001">
    <property type="entry name" value="Sodium/potassium-transporting ATPase subunit alpha"/>
    <property type="match status" value="1"/>
</dbReference>
<dbReference type="FunFam" id="3.40.50.1000:FF:000004">
    <property type="entry name" value="Sodium/potassium-transporting ATPase subunit alpha"/>
    <property type="match status" value="1"/>
</dbReference>
<dbReference type="FunFam" id="1.20.1110.10:FF:000095">
    <property type="entry name" value="Sodium/potassium-transporting ATPase subunit alpha-1"/>
    <property type="match status" value="2"/>
</dbReference>
<dbReference type="Gene3D" id="3.40.1110.10">
    <property type="entry name" value="Calcium-transporting ATPase, cytoplasmic domain N"/>
    <property type="match status" value="1"/>
</dbReference>
<dbReference type="Gene3D" id="2.70.150.10">
    <property type="entry name" value="Calcium-transporting ATPase, cytoplasmic transduction domain A"/>
    <property type="match status" value="1"/>
</dbReference>
<dbReference type="Gene3D" id="1.20.1110.10">
    <property type="entry name" value="Calcium-transporting ATPase, transmembrane domain"/>
    <property type="match status" value="1"/>
</dbReference>
<dbReference type="Gene3D" id="3.40.50.1000">
    <property type="entry name" value="HAD superfamily/HAD-like"/>
    <property type="match status" value="1"/>
</dbReference>
<dbReference type="InterPro" id="IPR006068">
    <property type="entry name" value="ATPase_P-typ_cation-transptr_C"/>
</dbReference>
<dbReference type="InterPro" id="IPR004014">
    <property type="entry name" value="ATPase_P-typ_cation-transptr_N"/>
</dbReference>
<dbReference type="InterPro" id="IPR023299">
    <property type="entry name" value="ATPase_P-typ_cyto_dom_N"/>
</dbReference>
<dbReference type="InterPro" id="IPR018303">
    <property type="entry name" value="ATPase_P-typ_P_site"/>
</dbReference>
<dbReference type="InterPro" id="IPR023298">
    <property type="entry name" value="ATPase_P-typ_TM_dom_sf"/>
</dbReference>
<dbReference type="InterPro" id="IPR008250">
    <property type="entry name" value="ATPase_P-typ_transduc_dom_A_sf"/>
</dbReference>
<dbReference type="InterPro" id="IPR050510">
    <property type="entry name" value="Cation_transp_ATPase_P-type"/>
</dbReference>
<dbReference type="InterPro" id="IPR036412">
    <property type="entry name" value="HAD-like_sf"/>
</dbReference>
<dbReference type="InterPro" id="IPR023214">
    <property type="entry name" value="HAD_sf"/>
</dbReference>
<dbReference type="InterPro" id="IPR005775">
    <property type="entry name" value="P-type_ATPase_IIC"/>
</dbReference>
<dbReference type="InterPro" id="IPR001757">
    <property type="entry name" value="P_typ_ATPase"/>
</dbReference>
<dbReference type="InterPro" id="IPR044492">
    <property type="entry name" value="P_typ_ATPase_HD_dom"/>
</dbReference>
<dbReference type="NCBIfam" id="TIGR01106">
    <property type="entry name" value="ATPase-IIC_X-K"/>
    <property type="match status" value="1"/>
</dbReference>
<dbReference type="NCBIfam" id="TIGR01494">
    <property type="entry name" value="ATPase_P-type"/>
    <property type="match status" value="2"/>
</dbReference>
<dbReference type="PANTHER" id="PTHR43294">
    <property type="entry name" value="SODIUM/POTASSIUM-TRANSPORTING ATPASE SUBUNIT ALPHA"/>
    <property type="match status" value="1"/>
</dbReference>
<dbReference type="PANTHER" id="PTHR43294:SF8">
    <property type="entry name" value="SODIUM_POTASSIUM-TRANSPORTING ATPASE SUBUNIT ALPHA"/>
    <property type="match status" value="1"/>
</dbReference>
<dbReference type="Pfam" id="PF13246">
    <property type="entry name" value="Cation_ATPase"/>
    <property type="match status" value="1"/>
</dbReference>
<dbReference type="Pfam" id="PF00689">
    <property type="entry name" value="Cation_ATPase_C"/>
    <property type="match status" value="1"/>
</dbReference>
<dbReference type="Pfam" id="PF00690">
    <property type="entry name" value="Cation_ATPase_N"/>
    <property type="match status" value="1"/>
</dbReference>
<dbReference type="Pfam" id="PF00122">
    <property type="entry name" value="E1-E2_ATPase"/>
    <property type="match status" value="1"/>
</dbReference>
<dbReference type="PRINTS" id="PR00119">
    <property type="entry name" value="CATATPASE"/>
</dbReference>
<dbReference type="PRINTS" id="PR00121">
    <property type="entry name" value="NAKATPASE"/>
</dbReference>
<dbReference type="SFLD" id="SFLDS00003">
    <property type="entry name" value="Haloacid_Dehalogenase"/>
    <property type="match status" value="1"/>
</dbReference>
<dbReference type="SFLD" id="SFLDF00027">
    <property type="entry name" value="p-type_atpase"/>
    <property type="match status" value="1"/>
</dbReference>
<dbReference type="SMART" id="SM00831">
    <property type="entry name" value="Cation_ATPase_N"/>
    <property type="match status" value="1"/>
</dbReference>
<dbReference type="SUPFAM" id="SSF81653">
    <property type="entry name" value="Calcium ATPase, transduction domain A"/>
    <property type="match status" value="1"/>
</dbReference>
<dbReference type="SUPFAM" id="SSF81665">
    <property type="entry name" value="Calcium ATPase, transmembrane domain M"/>
    <property type="match status" value="1"/>
</dbReference>
<dbReference type="SUPFAM" id="SSF56784">
    <property type="entry name" value="HAD-like"/>
    <property type="match status" value="1"/>
</dbReference>
<dbReference type="SUPFAM" id="SSF81660">
    <property type="entry name" value="Metal cation-transporting ATPase, ATP-binding domain N"/>
    <property type="match status" value="1"/>
</dbReference>
<dbReference type="PROSITE" id="PS00154">
    <property type="entry name" value="ATPASE_E1_E2"/>
    <property type="match status" value="1"/>
</dbReference>
<protein>
    <recommendedName>
        <fullName>Sodium/potassium-transporting ATPase subunit alpha-1</fullName>
        <shortName>Na(+)/K(+) ATPase alpha-1 subunit</shortName>
        <ecNumber>7.2.2.13</ecNumber>
    </recommendedName>
    <alternativeName>
        <fullName>Sodium pump subunit alpha-1</fullName>
    </alternativeName>
</protein>
<evidence type="ECO:0000250" key="1"/>
<evidence type="ECO:0000250" key="2">
    <source>
        <dbReference type="UniProtKB" id="P05023"/>
    </source>
</evidence>
<evidence type="ECO:0000255" key="3"/>
<evidence type="ECO:0000256" key="4">
    <source>
        <dbReference type="SAM" id="MobiDB-lite"/>
    </source>
</evidence>
<evidence type="ECO:0000305" key="5"/>
<organism>
    <name type="scientific">Anguilla anguilla</name>
    <name type="common">European freshwater eel</name>
    <name type="synonym">Muraena anguilla</name>
    <dbReference type="NCBI Taxonomy" id="7936"/>
    <lineage>
        <taxon>Eukaryota</taxon>
        <taxon>Metazoa</taxon>
        <taxon>Chordata</taxon>
        <taxon>Craniata</taxon>
        <taxon>Vertebrata</taxon>
        <taxon>Euteleostomi</taxon>
        <taxon>Actinopterygii</taxon>
        <taxon>Neopterygii</taxon>
        <taxon>Teleostei</taxon>
        <taxon>Anguilliformes</taxon>
        <taxon>Anguillidae</taxon>
        <taxon>Anguilla</taxon>
    </lineage>
</organism>